<feature type="chain" id="PRO_0000279408" description="Protein N-terminal glutamine amidohydrolase">
    <location>
        <begin position="1"/>
        <end position="207"/>
    </location>
</feature>
<feature type="active site" evidence="1">
    <location>
        <position position="30"/>
    </location>
</feature>
<feature type="active site" evidence="1">
    <location>
        <position position="83"/>
    </location>
</feature>
<feature type="active site" evidence="1">
    <location>
        <position position="99"/>
    </location>
</feature>
<feature type="splice variant" id="VSP_023422" description="In isoform 2." evidence="4">
    <location>
        <begin position="64"/>
        <end position="80"/>
    </location>
</feature>
<dbReference type="EC" id="3.5.1.122" evidence="2"/>
<dbReference type="EMBL" id="BC102447">
    <property type="protein sequence ID" value="AAI02448.1"/>
    <property type="molecule type" value="mRNA"/>
</dbReference>
<dbReference type="EMBL" id="DV842245">
    <property type="status" value="NOT_ANNOTATED_CDS"/>
    <property type="molecule type" value="mRNA"/>
</dbReference>
<dbReference type="RefSeq" id="NP_001030263.1">
    <molecule id="Q3T0D3-2"/>
    <property type="nucleotide sequence ID" value="NM_001035091.1"/>
</dbReference>
<dbReference type="RefSeq" id="XP_005215414.1">
    <molecule id="Q3T0D3-1"/>
    <property type="nucleotide sequence ID" value="XM_005215357.5"/>
</dbReference>
<dbReference type="SMR" id="Q3T0D3"/>
<dbReference type="FunCoup" id="Q3T0D3">
    <property type="interactions" value="2625"/>
</dbReference>
<dbReference type="STRING" id="9913.ENSBTAP00000013086"/>
<dbReference type="PaxDb" id="9913-ENSBTAP00000013086"/>
<dbReference type="Ensembl" id="ENSBTAT00000047857.2">
    <molecule id="Q3T0D3-2"/>
    <property type="protein sequence ID" value="ENSBTAP00000045021.1"/>
    <property type="gene ID" value="ENSBTAG00000009916.5"/>
</dbReference>
<dbReference type="GeneID" id="510463"/>
<dbReference type="KEGG" id="bta:510463"/>
<dbReference type="CTD" id="55093"/>
<dbReference type="VEuPathDB" id="HostDB:ENSBTAG00000009916"/>
<dbReference type="eggNOG" id="KOG3261">
    <property type="taxonomic scope" value="Eukaryota"/>
</dbReference>
<dbReference type="GeneTree" id="ENSGT00390000014398"/>
<dbReference type="HOGENOM" id="CLU_091083_1_0_1"/>
<dbReference type="InParanoid" id="Q3T0D3"/>
<dbReference type="OMA" id="GWGTVYS"/>
<dbReference type="OrthoDB" id="191192at2759"/>
<dbReference type="TreeFam" id="TF105807"/>
<dbReference type="BRENDA" id="3.5.1.122">
    <property type="organism ID" value="908"/>
</dbReference>
<dbReference type="Proteomes" id="UP000009136">
    <property type="component" value="Chromosome 14"/>
</dbReference>
<dbReference type="Bgee" id="ENSBTAG00000009916">
    <property type="expression patterns" value="Expressed in granulosa cell and 104 other cell types or tissues"/>
</dbReference>
<dbReference type="GO" id="GO:0005829">
    <property type="term" value="C:cytosol"/>
    <property type="evidence" value="ECO:0000250"/>
    <property type="project" value="UniProtKB"/>
</dbReference>
<dbReference type="GO" id="GO:0005634">
    <property type="term" value="C:nucleus"/>
    <property type="evidence" value="ECO:0000250"/>
    <property type="project" value="UniProtKB"/>
</dbReference>
<dbReference type="GO" id="GO:0008418">
    <property type="term" value="F:protein-N-terminal asparagine amidohydrolase activity"/>
    <property type="evidence" value="ECO:0007669"/>
    <property type="project" value="InterPro"/>
</dbReference>
<dbReference type="GO" id="GO:0070773">
    <property type="term" value="F:protein-N-terminal glutamine amidohydrolase activity"/>
    <property type="evidence" value="ECO:0000250"/>
    <property type="project" value="UniProtKB"/>
</dbReference>
<dbReference type="GO" id="GO:0036211">
    <property type="term" value="P:protein modification process"/>
    <property type="evidence" value="ECO:0000250"/>
    <property type="project" value="UniProtKB"/>
</dbReference>
<dbReference type="FunFam" id="3.10.620.10:FF:000001">
    <property type="entry name" value="Blast:Protein N-terminal glutamine amidohydrolase"/>
    <property type="match status" value="1"/>
</dbReference>
<dbReference type="Gene3D" id="3.10.620.10">
    <property type="entry name" value="Protein N-terminal glutamine amidohydrolase, alpha beta roll"/>
    <property type="match status" value="1"/>
</dbReference>
<dbReference type="InterPro" id="IPR037132">
    <property type="entry name" value="N_Gln_amidohydro_ab_roll_sf"/>
</dbReference>
<dbReference type="InterPro" id="IPR039733">
    <property type="entry name" value="NTAQ1"/>
</dbReference>
<dbReference type="InterPro" id="IPR023128">
    <property type="entry name" value="Prot_N_Gln_amidohydro_ab_roll"/>
</dbReference>
<dbReference type="PANTHER" id="PTHR13035">
    <property type="entry name" value="PROTEIN N-TERMINAL GLUTAMINE AMIDOHYDROLASE"/>
    <property type="match status" value="1"/>
</dbReference>
<dbReference type="PANTHER" id="PTHR13035:SF0">
    <property type="entry name" value="PROTEIN N-TERMINAL GLUTAMINE AMIDOHYDROLASE"/>
    <property type="match status" value="1"/>
</dbReference>
<dbReference type="Pfam" id="PF09764">
    <property type="entry name" value="Nt_Gln_amidase"/>
    <property type="match status" value="1"/>
</dbReference>
<evidence type="ECO:0000250" key="1"/>
<evidence type="ECO:0000250" key="2">
    <source>
        <dbReference type="UniProtKB" id="Q80WB5"/>
    </source>
</evidence>
<evidence type="ECO:0000250" key="3">
    <source>
        <dbReference type="UniProtKB" id="Q96HA8"/>
    </source>
</evidence>
<evidence type="ECO:0000303" key="4">
    <source ref="1"/>
</evidence>
<evidence type="ECO:0000305" key="5"/>
<name>NTAQ1_BOVIN</name>
<reference key="1">
    <citation type="submission" date="2005-08" db="EMBL/GenBank/DDBJ databases">
        <authorList>
            <consortium name="NIH - Mammalian Gene Collection (MGC) project"/>
        </authorList>
    </citation>
    <scope>NUCLEOTIDE SEQUENCE [LARGE SCALE MRNA] (ISOFORMS 1 AND 2)</scope>
    <source>
        <strain>Crossbred X Angus</strain>
        <tissue>Ileum</tissue>
    </source>
</reference>
<reference key="2">
    <citation type="journal article" date="2009" name="Mol. Cell">
        <title>Glutamine-specific N-terminal amidase, a component of the N-end rule pathway.</title>
        <authorList>
            <person name="Wang H."/>
            <person name="Piatkov K.I."/>
            <person name="Brower C.S."/>
            <person name="Varshavsky A."/>
        </authorList>
    </citation>
    <scope>IDENTIFICATION BY MASS SPECTROMETRY</scope>
</reference>
<accession>Q3T0D3</accession>
<sequence>MEGDAPVAAAAHYQPASPPRDACVYNSCYCEENIWKLCEYIKNHDQYPLEECYAVFISNERKMIPIWKQQARPGDGPVIWDYHVVLLHVSSGGQSFIYDLDTVLPFPCPFDTYVEDAFKSDEDIHPQFRRKFRVIRADSYLKNFASDRSHMKDSSGNWREPPPSYPCIETGDSKMNLNDFISMDPEVGWGAVYSLPEFVHRFSSQNY</sequence>
<gene>
    <name type="primary">NTAQ1</name>
    <name type="synonym">WDYHV1</name>
</gene>
<comment type="function">
    <text evidence="2">Mediates the side-chain deamidation of N-terminal glutamine residues to glutamate, an important step in N-end rule pathway of protein degradation. Conversion of the resulting N-terminal glutamine to glutamate renders the protein susceptible to arginylation, polyubiquitination and degradation as specified by the N-end rule. Does not act on substrates with internal or C-terminal glutamine and does not act on non-glutamine residues in any position. Does not deaminate acetylated N-terminal glutamine. With the exception of proline, all tested second-position residues on substrate peptides do not greatly influence the activity. In contrast, a proline at position 2, virtually abolishes deamidation of N-terminal glutamine.</text>
</comment>
<comment type="catalytic activity">
    <reaction evidence="2">
        <text>N-terminal L-glutaminyl-[protein] + H2O = N-terminal L-glutamyl-[protein] + NH4(+)</text>
        <dbReference type="Rhea" id="RHEA:50680"/>
        <dbReference type="Rhea" id="RHEA-COMP:12668"/>
        <dbReference type="Rhea" id="RHEA-COMP:12777"/>
        <dbReference type="ChEBI" id="CHEBI:15377"/>
        <dbReference type="ChEBI" id="CHEBI:28938"/>
        <dbReference type="ChEBI" id="CHEBI:64721"/>
        <dbReference type="ChEBI" id="CHEBI:64722"/>
        <dbReference type="EC" id="3.5.1.122"/>
    </reaction>
</comment>
<comment type="subunit">
    <text evidence="3">Monomer.</text>
</comment>
<comment type="subcellular location">
    <subcellularLocation>
        <location evidence="2">Cytoplasm</location>
        <location evidence="2">Cytosol</location>
    </subcellularLocation>
    <subcellularLocation>
        <location evidence="2">Nucleus</location>
    </subcellularLocation>
</comment>
<comment type="alternative products">
    <event type="alternative splicing"/>
    <isoform>
        <id>Q3T0D3-1</id>
        <name>1</name>
        <sequence type="displayed"/>
    </isoform>
    <isoform>
        <id>Q3T0D3-2</id>
        <name>2</name>
        <sequence type="described" ref="VSP_023422"/>
    </isoform>
</comment>
<comment type="similarity">
    <text evidence="5">Belongs to the NTAQ1 family.</text>
</comment>
<protein>
    <recommendedName>
        <fullName evidence="5">Protein N-terminal glutamine amidohydrolase</fullName>
        <ecNumber evidence="2">3.5.1.122</ecNumber>
    </recommendedName>
    <alternativeName>
        <fullName>Protein NH2-terminal glutamine deamidase</fullName>
        <shortName>N-terminal Gln amidase</shortName>
        <shortName>Nt(Q)-amidase</shortName>
    </alternativeName>
    <alternativeName>
        <fullName>WDYHV motif-containing protein 1</fullName>
    </alternativeName>
</protein>
<keyword id="KW-0025">Alternative splicing</keyword>
<keyword id="KW-0963">Cytoplasm</keyword>
<keyword id="KW-0378">Hydrolase</keyword>
<keyword id="KW-0539">Nucleus</keyword>
<keyword id="KW-1185">Reference proteome</keyword>
<proteinExistence type="evidence at protein level"/>
<organism>
    <name type="scientific">Bos taurus</name>
    <name type="common">Bovine</name>
    <dbReference type="NCBI Taxonomy" id="9913"/>
    <lineage>
        <taxon>Eukaryota</taxon>
        <taxon>Metazoa</taxon>
        <taxon>Chordata</taxon>
        <taxon>Craniata</taxon>
        <taxon>Vertebrata</taxon>
        <taxon>Euteleostomi</taxon>
        <taxon>Mammalia</taxon>
        <taxon>Eutheria</taxon>
        <taxon>Laurasiatheria</taxon>
        <taxon>Artiodactyla</taxon>
        <taxon>Ruminantia</taxon>
        <taxon>Pecora</taxon>
        <taxon>Bovidae</taxon>
        <taxon>Bovinae</taxon>
        <taxon>Bos</taxon>
    </lineage>
</organism>